<keyword id="KW-0002">3D-structure</keyword>
<keyword id="KW-1043">Host membrane</keyword>
<keyword id="KW-0472">Membrane</keyword>
<keyword id="KW-0812">Transmembrane</keyword>
<keyword id="KW-1133">Transmembrane helix</keyword>
<keyword id="KW-0946">Virion</keyword>
<proteinExistence type="evidence at protein level"/>
<gene>
    <name type="primary">VII</name>
</gene>
<evidence type="ECO:0000250" key="1"/>
<evidence type="ECO:0000255" key="2"/>
<evidence type="ECO:0000305" key="3"/>
<dbReference type="EMBL" id="V00606">
    <property type="protein sequence ID" value="CAA23869.1"/>
    <property type="molecule type" value="Genomic_DNA"/>
</dbReference>
<dbReference type="EMBL" id="J02448">
    <property type="protein sequence ID" value="AAA32212.1"/>
    <property type="molecule type" value="Genomic_DNA"/>
</dbReference>
<dbReference type="PIR" id="C04277">
    <property type="entry name" value="Z7BPF1"/>
</dbReference>
<dbReference type="RefSeq" id="YP_010775827.1">
    <property type="nucleotide sequence ID" value="NC_075025.1"/>
</dbReference>
<dbReference type="RefSeq" id="YP_010775837.1">
    <property type="nucleotide sequence ID" value="NC_075026.1"/>
</dbReference>
<dbReference type="RefSeq" id="YP_010775847.1">
    <property type="nucleotide sequence ID" value="NC_075027.1"/>
</dbReference>
<dbReference type="RefSeq" id="YP_010775857.1">
    <property type="nucleotide sequence ID" value="NC_075028.1"/>
</dbReference>
<dbReference type="RefSeq" id="YP_010775867.1">
    <property type="nucleotide sequence ID" value="NC_075029.1"/>
</dbReference>
<dbReference type="RefSeq" id="YP_010775877.1">
    <property type="nucleotide sequence ID" value="NC_075030.1"/>
</dbReference>
<dbReference type="RefSeq" id="YP_010775887.1">
    <property type="nucleotide sequence ID" value="NC_075031.1"/>
</dbReference>
<dbReference type="RefSeq" id="YP_010775897.1">
    <property type="nucleotide sequence ID" value="NC_075032.1"/>
</dbReference>
<dbReference type="RefSeq" id="YP_010775907.1">
    <property type="nucleotide sequence ID" value="NC_075033.1"/>
</dbReference>
<dbReference type="PDB" id="8B3P">
    <property type="method" value="EM"/>
    <property type="resolution" value="2.81 A"/>
    <property type="chains" value="AAA/BBB/CCC/DDD/EEE=1-33"/>
</dbReference>
<dbReference type="PDBsum" id="8B3P"/>
<dbReference type="EMDB" id="EMD-15832"/>
<dbReference type="SMR" id="P69534"/>
<dbReference type="GeneID" id="80512431"/>
<dbReference type="GeneID" id="80512442"/>
<dbReference type="GeneID" id="80512451"/>
<dbReference type="GeneID" id="80512462"/>
<dbReference type="GeneID" id="80512473"/>
<dbReference type="GeneID" id="80512490"/>
<dbReference type="GeneID" id="80512495"/>
<dbReference type="GeneID" id="80512506"/>
<dbReference type="GeneID" id="80512517"/>
<dbReference type="Proteomes" id="UP000002557">
    <property type="component" value="Genome"/>
</dbReference>
<dbReference type="Proteomes" id="UP000241027">
    <property type="component" value="Genome"/>
</dbReference>
<dbReference type="GO" id="GO:0033644">
    <property type="term" value="C:host cell membrane"/>
    <property type="evidence" value="ECO:0007669"/>
    <property type="project" value="UniProtKB-SubCell"/>
</dbReference>
<dbReference type="GO" id="GO:0016020">
    <property type="term" value="C:membrane"/>
    <property type="evidence" value="ECO:0007669"/>
    <property type="project" value="UniProtKB-KW"/>
</dbReference>
<dbReference type="GO" id="GO:0044423">
    <property type="term" value="C:virion component"/>
    <property type="evidence" value="ECO:0007669"/>
    <property type="project" value="UniProtKB-KW"/>
</dbReference>
<dbReference type="InterPro" id="IPR045539">
    <property type="entry name" value="Inovirus_G7P_2"/>
</dbReference>
<dbReference type="Pfam" id="PF19978">
    <property type="entry name" value="Inovirus_G7P_2"/>
    <property type="match status" value="1"/>
</dbReference>
<protein>
    <recommendedName>
        <fullName>Tail virion protein G7P</fullName>
    </recommendedName>
    <alternativeName>
        <fullName>Coat protein C, polypeptide I</fullName>
    </alternativeName>
    <alternativeName>
        <fullName>Gene 7 protein</fullName>
        <shortName>G7P</shortName>
    </alternativeName>
</protein>
<reference key="1">
    <citation type="journal article" date="1981" name="Gene">
        <title>Nucleotide sequence and genome organisation of filamentous bacteriophages f1 and fd.</title>
        <authorList>
            <person name="Beck E."/>
            <person name="Zink B."/>
        </authorList>
    </citation>
    <scope>NUCLEOTIDE SEQUENCE [GENOMIC DNA]</scope>
</reference>
<reference key="2">
    <citation type="journal article" date="1980" name="J. Virol.">
        <title>Nucleotide sequences in bacteriophage f1 DNA: nucleotide sequence of genes V, VII, and VIII.</title>
        <authorList>
            <person name="Hill D.F."/>
            <person name="Petersen G.B."/>
        </authorList>
    </citation>
    <scope>NUCLEOTIDE SEQUENCE [GENOMIC DNA]</scope>
</reference>
<reference key="3">
    <citation type="journal article" date="1982" name="J. Virol.">
        <title>Nucleotide sequence of bacteriophage f1 DNA.</title>
        <authorList>
            <person name="Hill D.F."/>
            <person name="Petersen G.B."/>
        </authorList>
    </citation>
    <scope>NUCLEOTIDE SEQUENCE [GENOMIC DNA]</scope>
</reference>
<feature type="chain" id="PRO_0000098176" description="Tail virion protein G7P">
    <location>
        <begin position="1"/>
        <end position="33"/>
    </location>
</feature>
<feature type="transmembrane region" description="Helical" evidence="2">
    <location>
        <begin position="10"/>
        <end position="30"/>
    </location>
</feature>
<sequence length="33" mass="3602">MEQVADFDTIYQAMIQISVVLCFALGIIAGGQR</sequence>
<comment type="function">
    <text evidence="1">May initiate with G9P the virion concomitant assembly-budding process, by interacting with the packaging signal of the viral genome. The assembly-budding takes place at the host inner membrane. In turn, G7P and G9P are present at the end of the filamentous virion that emerges first from the bacterial host (By similarity).</text>
</comment>
<comment type="subcellular location">
    <subcellularLocation>
        <location evidence="3">Virion</location>
    </subcellularLocation>
    <subcellularLocation>
        <location evidence="3">Host membrane</location>
        <topology evidence="3">Single-pass membrane protein</topology>
    </subcellularLocation>
    <text evidence="1">Prior to assembly, is found associated with the bacterial host inner membrane. There are about five copies of this protein per mature phage that are located on the tail side of the filamentous virion with G9P (By similarity).</text>
</comment>
<comment type="similarity">
    <text evidence="3">Belongs to the inovirus G7P protein family.</text>
</comment>
<accession>P69534</accession>
<accession>P03675</accession>
<name>G7P_BPF1</name>
<organismHost>
    <name type="scientific">Escherichia coli</name>
    <dbReference type="NCBI Taxonomy" id="562"/>
</organismHost>
<organism>
    <name type="scientific">Enterobacteria phage f1</name>
    <name type="common">Bacteriophage f1</name>
    <dbReference type="NCBI Taxonomy" id="10863"/>
    <lineage>
        <taxon>Viruses</taxon>
        <taxon>Monodnaviria</taxon>
        <taxon>Loebvirae</taxon>
        <taxon>Hofneiviricota</taxon>
        <taxon>Faserviricetes</taxon>
        <taxon>Tubulavirales</taxon>
        <taxon>Inoviridae</taxon>
        <taxon>Inovirus</taxon>
        <taxon>Enterobacteria phage M13</taxon>
    </lineage>
</organism>